<evidence type="ECO:0000255" key="1">
    <source>
        <dbReference type="HAMAP-Rule" id="MF_00757"/>
    </source>
</evidence>
<protein>
    <recommendedName>
        <fullName evidence="1">Ribonuclease P protein component 4</fullName>
        <shortName evidence="1">RNase P component 4</shortName>
        <ecNumber evidence="1">3.1.26.5</ecNumber>
    </recommendedName>
    <alternativeName>
        <fullName evidence="1">Rpp21</fullName>
    </alternativeName>
</protein>
<name>RNP4_METM5</name>
<reference key="1">
    <citation type="submission" date="2007-03" db="EMBL/GenBank/DDBJ databases">
        <title>Complete sequence of chromosome of Methanococcus maripaludis C5.</title>
        <authorList>
            <consortium name="US DOE Joint Genome Institute"/>
            <person name="Copeland A."/>
            <person name="Lucas S."/>
            <person name="Lapidus A."/>
            <person name="Barry K."/>
            <person name="Glavina del Rio T."/>
            <person name="Dalin E."/>
            <person name="Tice H."/>
            <person name="Pitluck S."/>
            <person name="Chertkov O."/>
            <person name="Brettin T."/>
            <person name="Bruce D."/>
            <person name="Han C."/>
            <person name="Detter J.C."/>
            <person name="Schmutz J."/>
            <person name="Larimer F."/>
            <person name="Land M."/>
            <person name="Hauser L."/>
            <person name="Kyrpides N."/>
            <person name="Mikhailova N."/>
            <person name="Sieprawska-Lupa M."/>
            <person name="Whitman W.B."/>
            <person name="Richardson P."/>
        </authorList>
    </citation>
    <scope>NUCLEOTIDE SEQUENCE [LARGE SCALE GENOMIC DNA]</scope>
    <source>
        <strain>C5 / ATCC BAA-1333</strain>
    </source>
</reference>
<comment type="function">
    <text evidence="1">Part of ribonuclease P, a protein complex that generates mature tRNA molecules by cleaving their 5'-ends.</text>
</comment>
<comment type="catalytic activity">
    <reaction evidence="1">
        <text>Endonucleolytic cleavage of RNA, removing 5'-extranucleotides from tRNA precursor.</text>
        <dbReference type="EC" id="3.1.26.5"/>
    </reaction>
</comment>
<comment type="cofactor">
    <cofactor evidence="1">
        <name>Zn(2+)</name>
        <dbReference type="ChEBI" id="CHEBI:29105"/>
    </cofactor>
    <text evidence="1">Binds 1 zinc ion per subunit.</text>
</comment>
<comment type="subunit">
    <text evidence="1">Consists of a catalytic RNA component and at least 4-5 protein subunits.</text>
</comment>
<comment type="subcellular location">
    <subcellularLocation>
        <location evidence="1">Cytoplasm</location>
    </subcellularLocation>
</comment>
<comment type="similarity">
    <text evidence="1">Belongs to the eukaryotic/archaeal RNase P protein component 4 family.</text>
</comment>
<gene>
    <name evidence="1" type="primary">rnp4</name>
    <name type="ordered locus">MmarC5_0728</name>
</gene>
<sequence>MKLKKKFLEKSKKIAEERIDVLMNLAEKESKAGKIDRSKNYVLLGKKIAMRMRMPYPKEWKRRICKNCGSFLIYGKNARVRTKAKNYPHVVITCLECNSITRIPIKSEKK</sequence>
<feature type="chain" id="PRO_1000046632" description="Ribonuclease P protein component 4">
    <location>
        <begin position="1"/>
        <end position="110"/>
    </location>
</feature>
<feature type="binding site" evidence="1">
    <location>
        <position position="65"/>
    </location>
    <ligand>
        <name>Zn(2+)</name>
        <dbReference type="ChEBI" id="CHEBI:29105"/>
    </ligand>
</feature>
<feature type="binding site" evidence="1">
    <location>
        <position position="68"/>
    </location>
    <ligand>
        <name>Zn(2+)</name>
        <dbReference type="ChEBI" id="CHEBI:29105"/>
    </ligand>
</feature>
<feature type="binding site" evidence="1">
    <location>
        <position position="94"/>
    </location>
    <ligand>
        <name>Zn(2+)</name>
        <dbReference type="ChEBI" id="CHEBI:29105"/>
    </ligand>
</feature>
<feature type="binding site" evidence="1">
    <location>
        <position position="97"/>
    </location>
    <ligand>
        <name>Zn(2+)</name>
        <dbReference type="ChEBI" id="CHEBI:29105"/>
    </ligand>
</feature>
<keyword id="KW-0963">Cytoplasm</keyword>
<keyword id="KW-0255">Endonuclease</keyword>
<keyword id="KW-0378">Hydrolase</keyword>
<keyword id="KW-0479">Metal-binding</keyword>
<keyword id="KW-0540">Nuclease</keyword>
<keyword id="KW-0819">tRNA processing</keyword>
<keyword id="KW-0862">Zinc</keyword>
<dbReference type="EC" id="3.1.26.5" evidence="1"/>
<dbReference type="EMBL" id="CP000609">
    <property type="protein sequence ID" value="ABO35038.1"/>
    <property type="molecule type" value="Genomic_DNA"/>
</dbReference>
<dbReference type="RefSeq" id="WP_011868492.1">
    <property type="nucleotide sequence ID" value="NC_009135.1"/>
</dbReference>
<dbReference type="SMR" id="A4FXV4"/>
<dbReference type="STRING" id="402880.MmarC5_0728"/>
<dbReference type="GeneID" id="4928715"/>
<dbReference type="KEGG" id="mmq:MmarC5_0728"/>
<dbReference type="eggNOG" id="arCOG04345">
    <property type="taxonomic scope" value="Archaea"/>
</dbReference>
<dbReference type="HOGENOM" id="CLU_079140_3_1_2"/>
<dbReference type="OrthoDB" id="10058at2157"/>
<dbReference type="Proteomes" id="UP000000253">
    <property type="component" value="Chromosome"/>
</dbReference>
<dbReference type="GO" id="GO:0005737">
    <property type="term" value="C:cytoplasm"/>
    <property type="evidence" value="ECO:0007669"/>
    <property type="project" value="UniProtKB-SubCell"/>
</dbReference>
<dbReference type="GO" id="GO:0030677">
    <property type="term" value="C:ribonuclease P complex"/>
    <property type="evidence" value="ECO:0007669"/>
    <property type="project" value="UniProtKB-UniRule"/>
</dbReference>
<dbReference type="GO" id="GO:0004526">
    <property type="term" value="F:ribonuclease P activity"/>
    <property type="evidence" value="ECO:0007669"/>
    <property type="project" value="UniProtKB-UniRule"/>
</dbReference>
<dbReference type="GO" id="GO:0008270">
    <property type="term" value="F:zinc ion binding"/>
    <property type="evidence" value="ECO:0007669"/>
    <property type="project" value="UniProtKB-UniRule"/>
</dbReference>
<dbReference type="GO" id="GO:0001682">
    <property type="term" value="P:tRNA 5'-leader removal"/>
    <property type="evidence" value="ECO:0007669"/>
    <property type="project" value="UniProtKB-UniRule"/>
</dbReference>
<dbReference type="Gene3D" id="6.20.50.20">
    <property type="match status" value="1"/>
</dbReference>
<dbReference type="Gene3D" id="1.20.5.420">
    <property type="entry name" value="Immunoglobulin FC, subunit C"/>
    <property type="match status" value="1"/>
</dbReference>
<dbReference type="HAMAP" id="MF_00757">
    <property type="entry name" value="RNase_P_4"/>
    <property type="match status" value="1"/>
</dbReference>
<dbReference type="InterPro" id="IPR016432">
    <property type="entry name" value="RNP4"/>
</dbReference>
<dbReference type="InterPro" id="IPR007175">
    <property type="entry name" value="Rpr2/Snm1/Rpp21"/>
</dbReference>
<dbReference type="PANTHER" id="PTHR14742:SF0">
    <property type="entry name" value="RIBONUCLEASE P PROTEIN SUBUNIT P21"/>
    <property type="match status" value="1"/>
</dbReference>
<dbReference type="PANTHER" id="PTHR14742">
    <property type="entry name" value="RIBONUCLEASE P SUBUNIT P21"/>
    <property type="match status" value="1"/>
</dbReference>
<dbReference type="Pfam" id="PF04032">
    <property type="entry name" value="Rpr2"/>
    <property type="match status" value="1"/>
</dbReference>
<dbReference type="PIRSF" id="PIRSF004878">
    <property type="entry name" value="RNase_P_4"/>
    <property type="match status" value="1"/>
</dbReference>
<proteinExistence type="inferred from homology"/>
<accession>A4FXV4</accession>
<organism>
    <name type="scientific">Methanococcus maripaludis (strain C5 / ATCC BAA-1333)</name>
    <dbReference type="NCBI Taxonomy" id="402880"/>
    <lineage>
        <taxon>Archaea</taxon>
        <taxon>Methanobacteriati</taxon>
        <taxon>Methanobacteriota</taxon>
        <taxon>Methanomada group</taxon>
        <taxon>Methanococci</taxon>
        <taxon>Methanococcales</taxon>
        <taxon>Methanococcaceae</taxon>
        <taxon>Methanococcus</taxon>
    </lineage>
</organism>